<keyword id="KW-0627">Porphyrin biosynthesis</keyword>
<keyword id="KW-1185">Reference proteome</keyword>
<keyword id="KW-0808">Transferase</keyword>
<reference key="1">
    <citation type="journal article" date="2010" name="Proc. Natl. Acad. Sci. U.S.A.">
        <title>Nitrosopumilus maritimus genome reveals unique mechanisms for nitrification and autotrophy in globally distributed marine crenarchaea.</title>
        <authorList>
            <person name="Walker C.B."/>
            <person name="de la Torre J.R."/>
            <person name="Klotz M.G."/>
            <person name="Urakawa H."/>
            <person name="Pinel N."/>
            <person name="Arp D.J."/>
            <person name="Brochier-Armanet C."/>
            <person name="Chain P.S."/>
            <person name="Chan P.P."/>
            <person name="Gollabgir A."/>
            <person name="Hemp J."/>
            <person name="Hugler M."/>
            <person name="Karr E.A."/>
            <person name="Konneke M."/>
            <person name="Shin M."/>
            <person name="Lawton T.J."/>
            <person name="Lowe T."/>
            <person name="Martens-Habbena W."/>
            <person name="Sayavedra-Soto L.A."/>
            <person name="Lang D."/>
            <person name="Sievert S.M."/>
            <person name="Rosenzweig A.C."/>
            <person name="Manning G."/>
            <person name="Stahl D.A."/>
        </authorList>
    </citation>
    <scope>NUCLEOTIDE SEQUENCE [LARGE SCALE GENOMIC DNA]</scope>
    <source>
        <strain>SCM1</strain>
    </source>
</reference>
<accession>A9A1A1</accession>
<feature type="chain" id="PRO_1000114166" description="Probable porphobilinogen deaminase">
    <location>
        <begin position="1"/>
        <end position="311"/>
    </location>
</feature>
<feature type="region of interest" description="Disordered" evidence="2">
    <location>
        <begin position="270"/>
        <end position="289"/>
    </location>
</feature>
<feature type="modified residue" description="S-(dipyrrolylmethanemethyl)cysteine" evidence="1">
    <location>
        <position position="237"/>
    </location>
</feature>
<organism>
    <name type="scientific">Nitrosopumilus maritimus (strain SCM1)</name>
    <dbReference type="NCBI Taxonomy" id="436308"/>
    <lineage>
        <taxon>Archaea</taxon>
        <taxon>Nitrososphaerota</taxon>
        <taxon>Nitrososphaeria</taxon>
        <taxon>Nitrosopumilales</taxon>
        <taxon>Nitrosopumilaceae</taxon>
        <taxon>Nitrosopumilus</taxon>
    </lineage>
</organism>
<name>HEM3_NITMS</name>
<evidence type="ECO:0000255" key="1">
    <source>
        <dbReference type="HAMAP-Rule" id="MF_00260"/>
    </source>
</evidence>
<evidence type="ECO:0000256" key="2">
    <source>
        <dbReference type="SAM" id="MobiDB-lite"/>
    </source>
</evidence>
<dbReference type="EC" id="2.5.1.61" evidence="1"/>
<dbReference type="EMBL" id="CP000866">
    <property type="protein sequence ID" value="ABX12387.1"/>
    <property type="molecule type" value="Genomic_DNA"/>
</dbReference>
<dbReference type="RefSeq" id="WP_012214874.1">
    <property type="nucleotide sequence ID" value="NC_010085.1"/>
</dbReference>
<dbReference type="SMR" id="A9A1A1"/>
<dbReference type="FunCoup" id="A9A1A1">
    <property type="interactions" value="208"/>
</dbReference>
<dbReference type="STRING" id="436308.Nmar_0491"/>
<dbReference type="EnsemblBacteria" id="ABX12387">
    <property type="protein sequence ID" value="ABX12387"/>
    <property type="gene ID" value="Nmar_0491"/>
</dbReference>
<dbReference type="GeneID" id="5774722"/>
<dbReference type="KEGG" id="nmr:Nmar_0491"/>
<dbReference type="eggNOG" id="arCOG04299">
    <property type="taxonomic scope" value="Archaea"/>
</dbReference>
<dbReference type="HOGENOM" id="CLU_019704_1_0_2"/>
<dbReference type="InParanoid" id="A9A1A1"/>
<dbReference type="OrthoDB" id="8042at2157"/>
<dbReference type="PhylomeDB" id="A9A1A1"/>
<dbReference type="UniPathway" id="UPA00251">
    <property type="reaction ID" value="UER00319"/>
</dbReference>
<dbReference type="Proteomes" id="UP000000792">
    <property type="component" value="Chromosome"/>
</dbReference>
<dbReference type="GO" id="GO:0005737">
    <property type="term" value="C:cytoplasm"/>
    <property type="evidence" value="ECO:0000318"/>
    <property type="project" value="GO_Central"/>
</dbReference>
<dbReference type="GO" id="GO:0004418">
    <property type="term" value="F:hydroxymethylbilane synthase activity"/>
    <property type="evidence" value="ECO:0000318"/>
    <property type="project" value="GO_Central"/>
</dbReference>
<dbReference type="GO" id="GO:0006783">
    <property type="term" value="P:heme biosynthetic process"/>
    <property type="evidence" value="ECO:0000318"/>
    <property type="project" value="GO_Central"/>
</dbReference>
<dbReference type="GO" id="GO:0006782">
    <property type="term" value="P:protoporphyrinogen IX biosynthetic process"/>
    <property type="evidence" value="ECO:0007669"/>
    <property type="project" value="UniProtKB-UniRule"/>
</dbReference>
<dbReference type="CDD" id="cd13644">
    <property type="entry name" value="PBP2_HemC_archaea"/>
    <property type="match status" value="1"/>
</dbReference>
<dbReference type="FunFam" id="3.40.190.10:FF:000005">
    <property type="entry name" value="Porphobilinogen deaminase"/>
    <property type="match status" value="1"/>
</dbReference>
<dbReference type="FunFam" id="3.40.190.10:FF:000086">
    <property type="entry name" value="Probable porphobilinogen deaminase"/>
    <property type="match status" value="1"/>
</dbReference>
<dbReference type="Gene3D" id="3.40.190.10">
    <property type="entry name" value="Periplasmic binding protein-like II"/>
    <property type="match status" value="2"/>
</dbReference>
<dbReference type="Gene3D" id="3.30.160.40">
    <property type="entry name" value="Porphobilinogen deaminase, C-terminal domain"/>
    <property type="match status" value="1"/>
</dbReference>
<dbReference type="HAMAP" id="MF_00260">
    <property type="entry name" value="Porphobil_deam"/>
    <property type="match status" value="1"/>
</dbReference>
<dbReference type="InterPro" id="IPR000860">
    <property type="entry name" value="HemC"/>
</dbReference>
<dbReference type="InterPro" id="IPR022417">
    <property type="entry name" value="Porphobilin_deaminase_N"/>
</dbReference>
<dbReference type="InterPro" id="IPR022418">
    <property type="entry name" value="Porphobilinogen_deaminase_C"/>
</dbReference>
<dbReference type="InterPro" id="IPR036803">
    <property type="entry name" value="Porphobilinogen_deaminase_C_sf"/>
</dbReference>
<dbReference type="NCBIfam" id="TIGR00212">
    <property type="entry name" value="hemC"/>
    <property type="match status" value="1"/>
</dbReference>
<dbReference type="PANTHER" id="PTHR11557">
    <property type="entry name" value="PORPHOBILINOGEN DEAMINASE"/>
    <property type="match status" value="1"/>
</dbReference>
<dbReference type="PANTHER" id="PTHR11557:SF0">
    <property type="entry name" value="PORPHOBILINOGEN DEAMINASE"/>
    <property type="match status" value="1"/>
</dbReference>
<dbReference type="Pfam" id="PF01379">
    <property type="entry name" value="Porphobil_deam"/>
    <property type="match status" value="1"/>
</dbReference>
<dbReference type="Pfam" id="PF03900">
    <property type="entry name" value="Porphobil_deamC"/>
    <property type="match status" value="1"/>
</dbReference>
<dbReference type="PIRSF" id="PIRSF001438">
    <property type="entry name" value="4pyrrol_synth_OHMeBilane_synth"/>
    <property type="match status" value="1"/>
</dbReference>
<dbReference type="PRINTS" id="PR00151">
    <property type="entry name" value="PORPHBDMNASE"/>
</dbReference>
<dbReference type="SUPFAM" id="SSF53850">
    <property type="entry name" value="Periplasmic binding protein-like II"/>
    <property type="match status" value="1"/>
</dbReference>
<dbReference type="SUPFAM" id="SSF54782">
    <property type="entry name" value="Porphobilinogen deaminase (hydroxymethylbilane synthase), C-terminal domain"/>
    <property type="match status" value="1"/>
</dbReference>
<sequence>MKYIVGARGSQLSVAQTNLVIAELKKAHPDTEYEIKTITTKGDTDSRPLFTIDQKGIFEKEIDRAVAQKEVDFAVHSLKDVPSELDDNLVLACIPKRETVNDVFISPDGSTLDSIKPGSVIGTSSLRRAVQVSRKRPDVTVKPIRGNIETRIKKASGENYDAIVLAKAGISRLGVDVKYTELSTDDFSPSPGQGAIAIVARADDSKTIEMLKKIEDPDSRLEIEAERALSDFVDSGCRFPVGAYAKSNGSEMTLTVTAFSVDGKQFLHVSKTGDKNNPKSLGQSAGEELREKGVNDLALNWREKVEEWNKT</sequence>
<proteinExistence type="inferred from homology"/>
<protein>
    <recommendedName>
        <fullName evidence="1">Probable porphobilinogen deaminase</fullName>
        <shortName evidence="1">PBG</shortName>
        <ecNumber evidence="1">2.5.1.61</ecNumber>
    </recommendedName>
    <alternativeName>
        <fullName evidence="1">Hydroxymethylbilane synthase</fullName>
        <shortName evidence="1">HMBS</shortName>
    </alternativeName>
    <alternativeName>
        <fullName evidence="1">Pre-uroporphyrinogen synthase</fullName>
    </alternativeName>
</protein>
<gene>
    <name evidence="1" type="primary">hemC</name>
    <name type="ordered locus">Nmar_0491</name>
</gene>
<comment type="function">
    <text evidence="1">Tetrapolymerization of the monopyrrole PBG into the hydroxymethylbilane pre-uroporphyrinogen in several discrete steps.</text>
</comment>
<comment type="catalytic activity">
    <reaction evidence="1">
        <text>4 porphobilinogen + H2O = hydroxymethylbilane + 4 NH4(+)</text>
        <dbReference type="Rhea" id="RHEA:13185"/>
        <dbReference type="ChEBI" id="CHEBI:15377"/>
        <dbReference type="ChEBI" id="CHEBI:28938"/>
        <dbReference type="ChEBI" id="CHEBI:57845"/>
        <dbReference type="ChEBI" id="CHEBI:58126"/>
        <dbReference type="EC" id="2.5.1.61"/>
    </reaction>
</comment>
<comment type="cofactor">
    <cofactor evidence="1">
        <name>dipyrromethane</name>
        <dbReference type="ChEBI" id="CHEBI:60342"/>
    </cofactor>
    <text evidence="1">Binds 1 dipyrromethane group covalently.</text>
</comment>
<comment type="pathway">
    <text evidence="1">Porphyrin-containing compound metabolism; protoporphyrin-IX biosynthesis; coproporphyrinogen-III from 5-aminolevulinate: step 2/4.</text>
</comment>
<comment type="miscellaneous">
    <text evidence="1">The porphobilinogen subunits are added to the dipyrromethane group.</text>
</comment>
<comment type="similarity">
    <text evidence="1">Belongs to the HMBS family.</text>
</comment>